<organism>
    <name type="scientific">Oceanobacillus iheyensis (strain DSM 14371 / CIP 107618 / JCM 11309 / KCTC 3954 / HTE831)</name>
    <dbReference type="NCBI Taxonomy" id="221109"/>
    <lineage>
        <taxon>Bacteria</taxon>
        <taxon>Bacillati</taxon>
        <taxon>Bacillota</taxon>
        <taxon>Bacilli</taxon>
        <taxon>Bacillales</taxon>
        <taxon>Bacillaceae</taxon>
        <taxon>Oceanobacillus</taxon>
    </lineage>
</organism>
<name>URK_OCEIH</name>
<dbReference type="EC" id="2.7.1.48" evidence="1"/>
<dbReference type="EMBL" id="BA000028">
    <property type="protein sequence ID" value="BAC13959.1"/>
    <property type="molecule type" value="Genomic_DNA"/>
</dbReference>
<dbReference type="RefSeq" id="WP_011066399.1">
    <property type="nucleotide sequence ID" value="NC_004193.1"/>
</dbReference>
<dbReference type="SMR" id="Q8EPT5"/>
<dbReference type="STRING" id="221109.gene:10734249"/>
<dbReference type="KEGG" id="oih:OB2003"/>
<dbReference type="eggNOG" id="COG0572">
    <property type="taxonomic scope" value="Bacteria"/>
</dbReference>
<dbReference type="HOGENOM" id="CLU_021278_1_2_9"/>
<dbReference type="OrthoDB" id="9777642at2"/>
<dbReference type="PhylomeDB" id="Q8EPT5"/>
<dbReference type="UniPathway" id="UPA00574">
    <property type="reaction ID" value="UER00637"/>
</dbReference>
<dbReference type="UniPathway" id="UPA00579">
    <property type="reaction ID" value="UER00640"/>
</dbReference>
<dbReference type="Proteomes" id="UP000000822">
    <property type="component" value="Chromosome"/>
</dbReference>
<dbReference type="GO" id="GO:0005737">
    <property type="term" value="C:cytoplasm"/>
    <property type="evidence" value="ECO:0007669"/>
    <property type="project" value="UniProtKB-SubCell"/>
</dbReference>
<dbReference type="GO" id="GO:0005524">
    <property type="term" value="F:ATP binding"/>
    <property type="evidence" value="ECO:0007669"/>
    <property type="project" value="UniProtKB-UniRule"/>
</dbReference>
<dbReference type="GO" id="GO:0043771">
    <property type="term" value="F:cytidine kinase activity"/>
    <property type="evidence" value="ECO:0007669"/>
    <property type="project" value="RHEA"/>
</dbReference>
<dbReference type="GO" id="GO:0004849">
    <property type="term" value="F:uridine kinase activity"/>
    <property type="evidence" value="ECO:0007669"/>
    <property type="project" value="UniProtKB-UniRule"/>
</dbReference>
<dbReference type="GO" id="GO:0044211">
    <property type="term" value="P:CTP salvage"/>
    <property type="evidence" value="ECO:0007669"/>
    <property type="project" value="UniProtKB-UniRule"/>
</dbReference>
<dbReference type="GO" id="GO:0044206">
    <property type="term" value="P:UMP salvage"/>
    <property type="evidence" value="ECO:0007669"/>
    <property type="project" value="UniProtKB-UniRule"/>
</dbReference>
<dbReference type="CDD" id="cd02023">
    <property type="entry name" value="UMPK"/>
    <property type="match status" value="1"/>
</dbReference>
<dbReference type="Gene3D" id="3.40.50.300">
    <property type="entry name" value="P-loop containing nucleotide triphosphate hydrolases"/>
    <property type="match status" value="1"/>
</dbReference>
<dbReference type="HAMAP" id="MF_00551">
    <property type="entry name" value="Uridine_kinase"/>
    <property type="match status" value="1"/>
</dbReference>
<dbReference type="InterPro" id="IPR027417">
    <property type="entry name" value="P-loop_NTPase"/>
</dbReference>
<dbReference type="InterPro" id="IPR006083">
    <property type="entry name" value="PRK/URK"/>
</dbReference>
<dbReference type="InterPro" id="IPR026008">
    <property type="entry name" value="Uridine_kinase"/>
</dbReference>
<dbReference type="InterPro" id="IPR000764">
    <property type="entry name" value="Uridine_kinase-like"/>
</dbReference>
<dbReference type="NCBIfam" id="NF004018">
    <property type="entry name" value="PRK05480.1"/>
    <property type="match status" value="1"/>
</dbReference>
<dbReference type="NCBIfam" id="TIGR00235">
    <property type="entry name" value="udk"/>
    <property type="match status" value="1"/>
</dbReference>
<dbReference type="PANTHER" id="PTHR10285">
    <property type="entry name" value="URIDINE KINASE"/>
    <property type="match status" value="1"/>
</dbReference>
<dbReference type="Pfam" id="PF00485">
    <property type="entry name" value="PRK"/>
    <property type="match status" value="1"/>
</dbReference>
<dbReference type="PRINTS" id="PR00988">
    <property type="entry name" value="URIDINKINASE"/>
</dbReference>
<dbReference type="SUPFAM" id="SSF52540">
    <property type="entry name" value="P-loop containing nucleoside triphosphate hydrolases"/>
    <property type="match status" value="1"/>
</dbReference>
<gene>
    <name evidence="1" type="primary">udk</name>
    <name type="ordered locus">OB2003</name>
</gene>
<comment type="catalytic activity">
    <reaction evidence="1">
        <text>uridine + ATP = UMP + ADP + H(+)</text>
        <dbReference type="Rhea" id="RHEA:16825"/>
        <dbReference type="ChEBI" id="CHEBI:15378"/>
        <dbReference type="ChEBI" id="CHEBI:16704"/>
        <dbReference type="ChEBI" id="CHEBI:30616"/>
        <dbReference type="ChEBI" id="CHEBI:57865"/>
        <dbReference type="ChEBI" id="CHEBI:456216"/>
        <dbReference type="EC" id="2.7.1.48"/>
    </reaction>
</comment>
<comment type="catalytic activity">
    <reaction evidence="1">
        <text>cytidine + ATP = CMP + ADP + H(+)</text>
        <dbReference type="Rhea" id="RHEA:24674"/>
        <dbReference type="ChEBI" id="CHEBI:15378"/>
        <dbReference type="ChEBI" id="CHEBI:17562"/>
        <dbReference type="ChEBI" id="CHEBI:30616"/>
        <dbReference type="ChEBI" id="CHEBI:60377"/>
        <dbReference type="ChEBI" id="CHEBI:456216"/>
        <dbReference type="EC" id="2.7.1.48"/>
    </reaction>
</comment>
<comment type="pathway">
    <text evidence="1">Pyrimidine metabolism; CTP biosynthesis via salvage pathway; CTP from cytidine: step 1/3.</text>
</comment>
<comment type="pathway">
    <text evidence="1">Pyrimidine metabolism; UMP biosynthesis via salvage pathway; UMP from uridine: step 1/1.</text>
</comment>
<comment type="subcellular location">
    <subcellularLocation>
        <location evidence="1">Cytoplasm</location>
    </subcellularLocation>
</comment>
<comment type="similarity">
    <text evidence="1">Belongs to the uridine kinase family.</text>
</comment>
<proteinExistence type="inferred from homology"/>
<protein>
    <recommendedName>
        <fullName evidence="1">Uridine kinase</fullName>
        <ecNumber evidence="1">2.7.1.48</ecNumber>
    </recommendedName>
    <alternativeName>
        <fullName evidence="1">Cytidine monophosphokinase</fullName>
    </alternativeName>
    <alternativeName>
        <fullName evidence="1">Uridine monophosphokinase</fullName>
    </alternativeName>
</protein>
<accession>Q8EPT5</accession>
<evidence type="ECO:0000255" key="1">
    <source>
        <dbReference type="HAMAP-Rule" id="MF_00551"/>
    </source>
</evidence>
<keyword id="KW-0067">ATP-binding</keyword>
<keyword id="KW-0963">Cytoplasm</keyword>
<keyword id="KW-0418">Kinase</keyword>
<keyword id="KW-0547">Nucleotide-binding</keyword>
<keyword id="KW-1185">Reference proteome</keyword>
<keyword id="KW-0808">Transferase</keyword>
<reference key="1">
    <citation type="journal article" date="2002" name="Nucleic Acids Res.">
        <title>Genome sequence of Oceanobacillus iheyensis isolated from the Iheya Ridge and its unexpected adaptive capabilities to extreme environments.</title>
        <authorList>
            <person name="Takami H."/>
            <person name="Takaki Y."/>
            <person name="Uchiyama I."/>
        </authorList>
    </citation>
    <scope>NUCLEOTIDE SEQUENCE [LARGE SCALE GENOMIC DNA]</scope>
    <source>
        <strain>DSM 14371 / CIP 107618 / JCM 11309 / KCTC 3954 / HTE831</strain>
    </source>
</reference>
<feature type="chain" id="PRO_0000164482" description="Uridine kinase">
    <location>
        <begin position="1"/>
        <end position="210"/>
    </location>
</feature>
<feature type="binding site" evidence="1">
    <location>
        <begin position="13"/>
        <end position="20"/>
    </location>
    <ligand>
        <name>ATP</name>
        <dbReference type="ChEBI" id="CHEBI:30616"/>
    </ligand>
</feature>
<sequence>MTKQKPVVIGVAGGSGSGKTSVTRSICQRFTETSILVIEQDYYYKDQSHLPFEERLNTNYDHPLAFDNDLLIEHLQQLMHNEPIEKPVYDYKIHTRSKDVIHVEPKEVIIVEGILILEDPRLVDLMDIKVYVDTDADLRIIRRLMRDIKERGRTLDSVIDQYIQNVRPSHLQFIEPTKRYADIIIPEGGQNHVAIDIMASKIEKILSRGL</sequence>